<protein>
    <recommendedName>
        <fullName evidence="1">DNA-directed RNA polymerase subunit alpha</fullName>
        <shortName evidence="1">RNAP subunit alpha</shortName>
        <ecNumber evidence="1">2.7.7.6</ecNumber>
    </recommendedName>
    <alternativeName>
        <fullName evidence="1">RNA polymerase subunit alpha</fullName>
    </alternativeName>
    <alternativeName>
        <fullName evidence="1">Transcriptase subunit alpha</fullName>
    </alternativeName>
</protein>
<comment type="function">
    <text evidence="1">DNA-dependent RNA polymerase catalyzes the transcription of DNA into RNA using the four ribonucleoside triphosphates as substrates.</text>
</comment>
<comment type="catalytic activity">
    <reaction evidence="1">
        <text>RNA(n) + a ribonucleoside 5'-triphosphate = RNA(n+1) + diphosphate</text>
        <dbReference type="Rhea" id="RHEA:21248"/>
        <dbReference type="Rhea" id="RHEA-COMP:14527"/>
        <dbReference type="Rhea" id="RHEA-COMP:17342"/>
        <dbReference type="ChEBI" id="CHEBI:33019"/>
        <dbReference type="ChEBI" id="CHEBI:61557"/>
        <dbReference type="ChEBI" id="CHEBI:140395"/>
        <dbReference type="EC" id="2.7.7.6"/>
    </reaction>
</comment>
<comment type="subunit">
    <text evidence="1">Homodimer. The RNAP catalytic core consists of 2 alpha, 1 beta, 1 beta' and 1 omega subunit. When a sigma factor is associated with the core the holoenzyme is formed, which can initiate transcription.</text>
</comment>
<comment type="domain">
    <text evidence="1">The N-terminal domain is essential for RNAP assembly and basal transcription, whereas the C-terminal domain is involved in interaction with transcriptional regulators and with upstream promoter elements.</text>
</comment>
<comment type="similarity">
    <text evidence="1">Belongs to the RNA polymerase alpha chain family.</text>
</comment>
<proteinExistence type="inferred from homology"/>
<name>RPOA1_STRAW</name>
<gene>
    <name evidence="1" type="primary">rpoA1</name>
    <name type="ordered locus">SAV_4953</name>
</gene>
<reference key="1">
    <citation type="journal article" date="2001" name="Proc. Natl. Acad. Sci. U.S.A.">
        <title>Genome sequence of an industrial microorganism Streptomyces avermitilis: deducing the ability of producing secondary metabolites.</title>
        <authorList>
            <person name="Omura S."/>
            <person name="Ikeda H."/>
            <person name="Ishikawa J."/>
            <person name="Hanamoto A."/>
            <person name="Takahashi C."/>
            <person name="Shinose M."/>
            <person name="Takahashi Y."/>
            <person name="Horikawa H."/>
            <person name="Nakazawa H."/>
            <person name="Osonoe T."/>
            <person name="Kikuchi H."/>
            <person name="Shiba T."/>
            <person name="Sakaki Y."/>
            <person name="Hattori M."/>
        </authorList>
    </citation>
    <scope>NUCLEOTIDE SEQUENCE [LARGE SCALE GENOMIC DNA]</scope>
    <source>
        <strain>ATCC 31267 / DSM 46492 / JCM 5070 / NBRC 14893 / NCIMB 12804 / NRRL 8165 / MA-4680</strain>
    </source>
</reference>
<reference key="2">
    <citation type="journal article" date="2003" name="Nat. Biotechnol.">
        <title>Complete genome sequence and comparative analysis of the industrial microorganism Streptomyces avermitilis.</title>
        <authorList>
            <person name="Ikeda H."/>
            <person name="Ishikawa J."/>
            <person name="Hanamoto A."/>
            <person name="Shinose M."/>
            <person name="Kikuchi H."/>
            <person name="Shiba T."/>
            <person name="Sakaki Y."/>
            <person name="Hattori M."/>
            <person name="Omura S."/>
        </authorList>
    </citation>
    <scope>NUCLEOTIDE SEQUENCE [LARGE SCALE GENOMIC DNA]</scope>
    <source>
        <strain>ATCC 31267 / DSM 46492 / JCM 5070 / NBRC 14893 / NCIMB 12804 / NRRL 8165 / MA-4680</strain>
    </source>
</reference>
<evidence type="ECO:0000255" key="1">
    <source>
        <dbReference type="HAMAP-Rule" id="MF_00059"/>
    </source>
</evidence>
<keyword id="KW-0240">DNA-directed RNA polymerase</keyword>
<keyword id="KW-0548">Nucleotidyltransferase</keyword>
<keyword id="KW-1185">Reference proteome</keyword>
<keyword id="KW-0804">Transcription</keyword>
<keyword id="KW-0808">Transferase</keyword>
<sequence length="340" mass="36696">MLIAQRPSLTEEVVDEFRSRFVIEPLEPGFGYTLGNSLRRTLLSSIPGAAVTSIRIDGVLHEFTTVPGVKEDVTDLILNIKQLVVSSEHDEPVVMYLRKQGPGLVTAADIAPPAGVEVHNPDLVLATLNGKGKLEMELTVERGRGYVSAVQNKQVGQEIGRIPVDSIYSPVLKVTYKVEATRVEQRTDFDKLIVDVETKQAMRPRDAMASAGKTLVELFGLARELNIDAEGIDMGPSPTDAALAADLALPIEELELTVRSYNCLKREGIHSVGELVARSEADLLDIRNFGAKSIDEVKAKLAGMGLALKDSPPGFDPTAAADAFGADDDADAGFVETEQY</sequence>
<accession>P60313</accession>
<accession>O86774</accession>
<accession>P72404</accession>
<organism>
    <name type="scientific">Streptomyces avermitilis (strain ATCC 31267 / DSM 46492 / JCM 5070 / NBRC 14893 / NCIMB 12804 / NRRL 8165 / MA-4680)</name>
    <dbReference type="NCBI Taxonomy" id="227882"/>
    <lineage>
        <taxon>Bacteria</taxon>
        <taxon>Bacillati</taxon>
        <taxon>Actinomycetota</taxon>
        <taxon>Actinomycetes</taxon>
        <taxon>Kitasatosporales</taxon>
        <taxon>Streptomycetaceae</taxon>
        <taxon>Streptomyces</taxon>
    </lineage>
</organism>
<feature type="chain" id="PRO_0000175390" description="DNA-directed RNA polymerase subunit alpha">
    <location>
        <begin position="1"/>
        <end position="340"/>
    </location>
</feature>
<feature type="region of interest" description="Alpha N-terminal domain (alpha-NTD)" evidence="1">
    <location>
        <begin position="1"/>
        <end position="226"/>
    </location>
</feature>
<feature type="region of interest" description="Alpha C-terminal domain (alpha-CTD)" evidence="1">
    <location>
        <begin position="243"/>
        <end position="340"/>
    </location>
</feature>
<dbReference type="EC" id="2.7.7.6" evidence="1"/>
<dbReference type="EMBL" id="BA000030">
    <property type="protein sequence ID" value="BAC72665.1"/>
    <property type="molecule type" value="Genomic_DNA"/>
</dbReference>
<dbReference type="RefSeq" id="WP_003966937.1">
    <property type="nucleotide sequence ID" value="NZ_JZJK01000077.1"/>
</dbReference>
<dbReference type="SMR" id="P60313"/>
<dbReference type="KEGG" id="sma:SAVERM_4953"/>
<dbReference type="eggNOG" id="COG0202">
    <property type="taxonomic scope" value="Bacteria"/>
</dbReference>
<dbReference type="HOGENOM" id="CLU_053084_0_1_11"/>
<dbReference type="OrthoDB" id="9805706at2"/>
<dbReference type="Proteomes" id="UP000000428">
    <property type="component" value="Chromosome"/>
</dbReference>
<dbReference type="GO" id="GO:0005737">
    <property type="term" value="C:cytoplasm"/>
    <property type="evidence" value="ECO:0007669"/>
    <property type="project" value="UniProtKB-ARBA"/>
</dbReference>
<dbReference type="GO" id="GO:0000428">
    <property type="term" value="C:DNA-directed RNA polymerase complex"/>
    <property type="evidence" value="ECO:0007669"/>
    <property type="project" value="UniProtKB-KW"/>
</dbReference>
<dbReference type="GO" id="GO:0003677">
    <property type="term" value="F:DNA binding"/>
    <property type="evidence" value="ECO:0007669"/>
    <property type="project" value="UniProtKB-UniRule"/>
</dbReference>
<dbReference type="GO" id="GO:0003899">
    <property type="term" value="F:DNA-directed RNA polymerase activity"/>
    <property type="evidence" value="ECO:0007669"/>
    <property type="project" value="UniProtKB-UniRule"/>
</dbReference>
<dbReference type="GO" id="GO:0046983">
    <property type="term" value="F:protein dimerization activity"/>
    <property type="evidence" value="ECO:0007669"/>
    <property type="project" value="InterPro"/>
</dbReference>
<dbReference type="GO" id="GO:0006351">
    <property type="term" value="P:DNA-templated transcription"/>
    <property type="evidence" value="ECO:0007669"/>
    <property type="project" value="UniProtKB-UniRule"/>
</dbReference>
<dbReference type="CDD" id="cd06928">
    <property type="entry name" value="RNAP_alpha_NTD"/>
    <property type="match status" value="1"/>
</dbReference>
<dbReference type="FunFam" id="1.10.150.20:FF:000001">
    <property type="entry name" value="DNA-directed RNA polymerase subunit alpha"/>
    <property type="match status" value="1"/>
</dbReference>
<dbReference type="FunFam" id="2.170.120.12:FF:000001">
    <property type="entry name" value="DNA-directed RNA polymerase subunit alpha"/>
    <property type="match status" value="1"/>
</dbReference>
<dbReference type="Gene3D" id="1.10.150.20">
    <property type="entry name" value="5' to 3' exonuclease, C-terminal subdomain"/>
    <property type="match status" value="1"/>
</dbReference>
<dbReference type="Gene3D" id="2.170.120.12">
    <property type="entry name" value="DNA-directed RNA polymerase, insert domain"/>
    <property type="match status" value="1"/>
</dbReference>
<dbReference type="Gene3D" id="3.30.1360.10">
    <property type="entry name" value="RNA polymerase, RBP11-like subunit"/>
    <property type="match status" value="1"/>
</dbReference>
<dbReference type="HAMAP" id="MF_00059">
    <property type="entry name" value="RNApol_bact_RpoA"/>
    <property type="match status" value="1"/>
</dbReference>
<dbReference type="InterPro" id="IPR011262">
    <property type="entry name" value="DNA-dir_RNA_pol_insert"/>
</dbReference>
<dbReference type="InterPro" id="IPR011263">
    <property type="entry name" value="DNA-dir_RNA_pol_RpoA/D/Rpb3"/>
</dbReference>
<dbReference type="InterPro" id="IPR011773">
    <property type="entry name" value="DNA-dir_RpoA"/>
</dbReference>
<dbReference type="InterPro" id="IPR036603">
    <property type="entry name" value="RBP11-like"/>
</dbReference>
<dbReference type="InterPro" id="IPR011260">
    <property type="entry name" value="RNAP_asu_C"/>
</dbReference>
<dbReference type="InterPro" id="IPR036643">
    <property type="entry name" value="RNApol_insert_sf"/>
</dbReference>
<dbReference type="NCBIfam" id="NF003513">
    <property type="entry name" value="PRK05182.1-2"/>
    <property type="match status" value="1"/>
</dbReference>
<dbReference type="NCBIfam" id="NF003514">
    <property type="entry name" value="PRK05182.1-4"/>
    <property type="match status" value="1"/>
</dbReference>
<dbReference type="NCBIfam" id="NF003519">
    <property type="entry name" value="PRK05182.2-5"/>
    <property type="match status" value="1"/>
</dbReference>
<dbReference type="NCBIfam" id="TIGR02027">
    <property type="entry name" value="rpoA"/>
    <property type="match status" value="1"/>
</dbReference>
<dbReference type="Pfam" id="PF01000">
    <property type="entry name" value="RNA_pol_A_bac"/>
    <property type="match status" value="1"/>
</dbReference>
<dbReference type="Pfam" id="PF03118">
    <property type="entry name" value="RNA_pol_A_CTD"/>
    <property type="match status" value="1"/>
</dbReference>
<dbReference type="Pfam" id="PF01193">
    <property type="entry name" value="RNA_pol_L"/>
    <property type="match status" value="1"/>
</dbReference>
<dbReference type="SMART" id="SM00662">
    <property type="entry name" value="RPOLD"/>
    <property type="match status" value="1"/>
</dbReference>
<dbReference type="SUPFAM" id="SSF47789">
    <property type="entry name" value="C-terminal domain of RNA polymerase alpha subunit"/>
    <property type="match status" value="1"/>
</dbReference>
<dbReference type="SUPFAM" id="SSF56553">
    <property type="entry name" value="Insert subdomain of RNA polymerase alpha subunit"/>
    <property type="match status" value="1"/>
</dbReference>
<dbReference type="SUPFAM" id="SSF55257">
    <property type="entry name" value="RBP11-like subunits of RNA polymerase"/>
    <property type="match status" value="1"/>
</dbReference>